<name>T2FB_HUMAN</name>
<protein>
    <recommendedName>
        <fullName>General transcription factor IIF subunit 2</fullName>
    </recommendedName>
    <alternativeName>
        <fullName>General transcription factor IIF 30 kDa subunit</fullName>
    </alternativeName>
    <alternativeName>
        <fullName>Transcription initiation factor IIF subunit beta</fullName>
        <shortName>TFIIF-beta</shortName>
    </alternativeName>
    <alternativeName>
        <fullName>Transcription initiation factor RAP30</fullName>
    </alternativeName>
</protein>
<sequence length="249" mass="28380">MAERGELDLTGAKQNTGVWLVKVPKYLSQQWAKASGRGEVGKLRIAKTQGRTEVSFTLNEDLANIHDIGGKPASVSAPREHPFVLQSVGGQTLTVFTESSSDKLSLEGIVVQRAECRPAASENYMRLKRLQIEESSKPVRLSQQLDKVVTTNYKPVANHQYNIEYERKKKEDGKRARADKQHVLDMLFSAFEKHQYYNLKDLVDITKQPVVYLKEILKEIGVQNVKGIHKNTWELKPEYRHYQGEEKSD</sequence>
<accession>P13984</accession>
<accession>A6NNS5</accession>
<accession>Q5W0H3</accession>
<reference key="1">
    <citation type="journal article" date="1989" name="Nature">
        <title>Structure and associated DNA-helicase activity of a general transcription initiation factor that binds to RNA polymerase II.</title>
        <authorList>
            <person name="Sopta M."/>
            <person name="Burton Z.F."/>
            <person name="Greenblatt J."/>
        </authorList>
    </citation>
    <scope>NUCLEOTIDE SEQUENCE [MRNA]</scope>
    <scope>PARTIAL PROTEIN SEQUENCE</scope>
    <scope>FUNCTION</scope>
    <source>
        <tissue>Kidney</tissue>
    </source>
</reference>
<reference key="2">
    <citation type="journal article" date="1991" name="Nucleic Acids Res.">
        <title>Nucleotide and amino acid sequence of RAP30.</title>
        <authorList>
            <person name="Horikoshi M."/>
            <person name="Fujita H."/>
            <person name="Wang J."/>
            <person name="Takada R."/>
            <person name="Roeder R.G."/>
        </authorList>
    </citation>
    <scope>NUCLEOTIDE SEQUENCE [MRNA]</scope>
</reference>
<reference key="3">
    <citation type="journal article" date="2004" name="Nat. Genet.">
        <title>Complete sequencing and characterization of 21,243 full-length human cDNAs.</title>
        <authorList>
            <person name="Ota T."/>
            <person name="Suzuki Y."/>
            <person name="Nishikawa T."/>
            <person name="Otsuki T."/>
            <person name="Sugiyama T."/>
            <person name="Irie R."/>
            <person name="Wakamatsu A."/>
            <person name="Hayashi K."/>
            <person name="Sato H."/>
            <person name="Nagai K."/>
            <person name="Kimura K."/>
            <person name="Makita H."/>
            <person name="Sekine M."/>
            <person name="Obayashi M."/>
            <person name="Nishi T."/>
            <person name="Shibahara T."/>
            <person name="Tanaka T."/>
            <person name="Ishii S."/>
            <person name="Yamamoto J."/>
            <person name="Saito K."/>
            <person name="Kawai Y."/>
            <person name="Isono Y."/>
            <person name="Nakamura Y."/>
            <person name="Nagahari K."/>
            <person name="Murakami K."/>
            <person name="Yasuda T."/>
            <person name="Iwayanagi T."/>
            <person name="Wagatsuma M."/>
            <person name="Shiratori A."/>
            <person name="Sudo H."/>
            <person name="Hosoiri T."/>
            <person name="Kaku Y."/>
            <person name="Kodaira H."/>
            <person name="Kondo H."/>
            <person name="Sugawara M."/>
            <person name="Takahashi M."/>
            <person name="Kanda K."/>
            <person name="Yokoi T."/>
            <person name="Furuya T."/>
            <person name="Kikkawa E."/>
            <person name="Omura Y."/>
            <person name="Abe K."/>
            <person name="Kamihara K."/>
            <person name="Katsuta N."/>
            <person name="Sato K."/>
            <person name="Tanikawa M."/>
            <person name="Yamazaki M."/>
            <person name="Ninomiya K."/>
            <person name="Ishibashi T."/>
            <person name="Yamashita H."/>
            <person name="Murakawa K."/>
            <person name="Fujimori K."/>
            <person name="Tanai H."/>
            <person name="Kimata M."/>
            <person name="Watanabe M."/>
            <person name="Hiraoka S."/>
            <person name="Chiba Y."/>
            <person name="Ishida S."/>
            <person name="Ono Y."/>
            <person name="Takiguchi S."/>
            <person name="Watanabe S."/>
            <person name="Yosida M."/>
            <person name="Hotuta T."/>
            <person name="Kusano J."/>
            <person name="Kanehori K."/>
            <person name="Takahashi-Fujii A."/>
            <person name="Hara H."/>
            <person name="Tanase T.-O."/>
            <person name="Nomura Y."/>
            <person name="Togiya S."/>
            <person name="Komai F."/>
            <person name="Hara R."/>
            <person name="Takeuchi K."/>
            <person name="Arita M."/>
            <person name="Imose N."/>
            <person name="Musashino K."/>
            <person name="Yuuki H."/>
            <person name="Oshima A."/>
            <person name="Sasaki N."/>
            <person name="Aotsuka S."/>
            <person name="Yoshikawa Y."/>
            <person name="Matsunawa H."/>
            <person name="Ichihara T."/>
            <person name="Shiohata N."/>
            <person name="Sano S."/>
            <person name="Moriya S."/>
            <person name="Momiyama H."/>
            <person name="Satoh N."/>
            <person name="Takami S."/>
            <person name="Terashima Y."/>
            <person name="Suzuki O."/>
            <person name="Nakagawa S."/>
            <person name="Senoh A."/>
            <person name="Mizoguchi H."/>
            <person name="Goto Y."/>
            <person name="Shimizu F."/>
            <person name="Wakebe H."/>
            <person name="Hishigaki H."/>
            <person name="Watanabe T."/>
            <person name="Sugiyama A."/>
            <person name="Takemoto M."/>
            <person name="Kawakami B."/>
            <person name="Yamazaki M."/>
            <person name="Watanabe K."/>
            <person name="Kumagai A."/>
            <person name="Itakura S."/>
            <person name="Fukuzumi Y."/>
            <person name="Fujimori Y."/>
            <person name="Komiyama M."/>
            <person name="Tashiro H."/>
            <person name="Tanigami A."/>
            <person name="Fujiwara T."/>
            <person name="Ono T."/>
            <person name="Yamada K."/>
            <person name="Fujii Y."/>
            <person name="Ozaki K."/>
            <person name="Hirao M."/>
            <person name="Ohmori Y."/>
            <person name="Kawabata A."/>
            <person name="Hikiji T."/>
            <person name="Kobatake N."/>
            <person name="Inagaki H."/>
            <person name="Ikema Y."/>
            <person name="Okamoto S."/>
            <person name="Okitani R."/>
            <person name="Kawakami T."/>
            <person name="Noguchi S."/>
            <person name="Itoh T."/>
            <person name="Shigeta K."/>
            <person name="Senba T."/>
            <person name="Matsumura K."/>
            <person name="Nakajima Y."/>
            <person name="Mizuno T."/>
            <person name="Morinaga M."/>
            <person name="Sasaki M."/>
            <person name="Togashi T."/>
            <person name="Oyama M."/>
            <person name="Hata H."/>
            <person name="Watanabe M."/>
            <person name="Komatsu T."/>
            <person name="Mizushima-Sugano J."/>
            <person name="Satoh T."/>
            <person name="Shirai Y."/>
            <person name="Takahashi Y."/>
            <person name="Nakagawa K."/>
            <person name="Okumura K."/>
            <person name="Nagase T."/>
            <person name="Nomura N."/>
            <person name="Kikuchi H."/>
            <person name="Masuho Y."/>
            <person name="Yamashita R."/>
            <person name="Nakai K."/>
            <person name="Yada T."/>
            <person name="Nakamura Y."/>
            <person name="Ohara O."/>
            <person name="Isogai T."/>
            <person name="Sugano S."/>
        </authorList>
    </citation>
    <scope>NUCLEOTIDE SEQUENCE [LARGE SCALE MRNA]</scope>
    <source>
        <tissue>Placenta</tissue>
    </source>
</reference>
<reference key="4">
    <citation type="submission" date="2004-10" db="EMBL/GenBank/DDBJ databases">
        <title>Cloning of human full-length CDSs in BD Creator(TM) system donor vector.</title>
        <authorList>
            <person name="Kalnine N."/>
            <person name="Chen X."/>
            <person name="Rolfs A."/>
            <person name="Halleck A."/>
            <person name="Hines L."/>
            <person name="Eisenstein S."/>
            <person name="Koundinya M."/>
            <person name="Raphael J."/>
            <person name="Moreira D."/>
            <person name="Kelley T."/>
            <person name="LaBaer J."/>
            <person name="Lin Y."/>
            <person name="Phelan M."/>
            <person name="Farmer A."/>
        </authorList>
    </citation>
    <scope>NUCLEOTIDE SEQUENCE [LARGE SCALE MRNA]</scope>
</reference>
<reference key="5">
    <citation type="journal article" date="2004" name="Nature">
        <title>The DNA sequence and analysis of human chromosome 13.</title>
        <authorList>
            <person name="Dunham A."/>
            <person name="Matthews L.H."/>
            <person name="Burton J."/>
            <person name="Ashurst J.L."/>
            <person name="Howe K.L."/>
            <person name="Ashcroft K.J."/>
            <person name="Beare D.M."/>
            <person name="Burford D.C."/>
            <person name="Hunt S.E."/>
            <person name="Griffiths-Jones S."/>
            <person name="Jones M.C."/>
            <person name="Keenan S.J."/>
            <person name="Oliver K."/>
            <person name="Scott C.E."/>
            <person name="Ainscough R."/>
            <person name="Almeida J.P."/>
            <person name="Ambrose K.D."/>
            <person name="Andrews D.T."/>
            <person name="Ashwell R.I.S."/>
            <person name="Babbage A.K."/>
            <person name="Bagguley C.L."/>
            <person name="Bailey J."/>
            <person name="Bannerjee R."/>
            <person name="Barlow K.F."/>
            <person name="Bates K."/>
            <person name="Beasley H."/>
            <person name="Bird C.P."/>
            <person name="Bray-Allen S."/>
            <person name="Brown A.J."/>
            <person name="Brown J.Y."/>
            <person name="Burrill W."/>
            <person name="Carder C."/>
            <person name="Carter N.P."/>
            <person name="Chapman J.C."/>
            <person name="Clamp M.E."/>
            <person name="Clark S.Y."/>
            <person name="Clarke G."/>
            <person name="Clee C.M."/>
            <person name="Clegg S.C."/>
            <person name="Cobley V."/>
            <person name="Collins J.E."/>
            <person name="Corby N."/>
            <person name="Coville G.J."/>
            <person name="Deloukas P."/>
            <person name="Dhami P."/>
            <person name="Dunham I."/>
            <person name="Dunn M."/>
            <person name="Earthrowl M.E."/>
            <person name="Ellington A.G."/>
            <person name="Faulkner L."/>
            <person name="Frankish A.G."/>
            <person name="Frankland J."/>
            <person name="French L."/>
            <person name="Garner P."/>
            <person name="Garnett J."/>
            <person name="Gilbert J.G.R."/>
            <person name="Gilson C.J."/>
            <person name="Ghori J."/>
            <person name="Grafham D.V."/>
            <person name="Gribble S.M."/>
            <person name="Griffiths C."/>
            <person name="Hall R.E."/>
            <person name="Hammond S."/>
            <person name="Harley J.L."/>
            <person name="Hart E.A."/>
            <person name="Heath P.D."/>
            <person name="Howden P.J."/>
            <person name="Huckle E.J."/>
            <person name="Hunt P.J."/>
            <person name="Hunt A.R."/>
            <person name="Johnson C."/>
            <person name="Johnson D."/>
            <person name="Kay M."/>
            <person name="Kimberley A.M."/>
            <person name="King A."/>
            <person name="Laird G.K."/>
            <person name="Langford C.J."/>
            <person name="Lawlor S."/>
            <person name="Leongamornlert D.A."/>
            <person name="Lloyd D.M."/>
            <person name="Lloyd C."/>
            <person name="Loveland J.E."/>
            <person name="Lovell J."/>
            <person name="Martin S."/>
            <person name="Mashreghi-Mohammadi M."/>
            <person name="McLaren S.J."/>
            <person name="McMurray A."/>
            <person name="Milne S."/>
            <person name="Moore M.J.F."/>
            <person name="Nickerson T."/>
            <person name="Palmer S.A."/>
            <person name="Pearce A.V."/>
            <person name="Peck A.I."/>
            <person name="Pelan S."/>
            <person name="Phillimore B."/>
            <person name="Porter K.M."/>
            <person name="Rice C.M."/>
            <person name="Searle S."/>
            <person name="Sehra H.K."/>
            <person name="Shownkeen R."/>
            <person name="Skuce C.D."/>
            <person name="Smith M."/>
            <person name="Steward C.A."/>
            <person name="Sycamore N."/>
            <person name="Tester J."/>
            <person name="Thomas D.W."/>
            <person name="Tracey A."/>
            <person name="Tromans A."/>
            <person name="Tubby B."/>
            <person name="Wall M."/>
            <person name="Wallis J.M."/>
            <person name="West A.P."/>
            <person name="Whitehead S.L."/>
            <person name="Willey D.L."/>
            <person name="Wilming L."/>
            <person name="Wray P.W."/>
            <person name="Wright M.W."/>
            <person name="Young L."/>
            <person name="Coulson A."/>
            <person name="Durbin R.M."/>
            <person name="Hubbard T."/>
            <person name="Sulston J.E."/>
            <person name="Beck S."/>
            <person name="Bentley D.R."/>
            <person name="Rogers J."/>
            <person name="Ross M.T."/>
        </authorList>
    </citation>
    <scope>NUCLEOTIDE SEQUENCE [LARGE SCALE GENOMIC DNA]</scope>
</reference>
<reference key="6">
    <citation type="submission" date="2005-07" db="EMBL/GenBank/DDBJ databases">
        <authorList>
            <person name="Mural R.J."/>
            <person name="Istrail S."/>
            <person name="Sutton G.G."/>
            <person name="Florea L."/>
            <person name="Halpern A.L."/>
            <person name="Mobarry C.M."/>
            <person name="Lippert R."/>
            <person name="Walenz B."/>
            <person name="Shatkay H."/>
            <person name="Dew I."/>
            <person name="Miller J.R."/>
            <person name="Flanigan M.J."/>
            <person name="Edwards N.J."/>
            <person name="Bolanos R."/>
            <person name="Fasulo D."/>
            <person name="Halldorsson B.V."/>
            <person name="Hannenhalli S."/>
            <person name="Turner R."/>
            <person name="Yooseph S."/>
            <person name="Lu F."/>
            <person name="Nusskern D.R."/>
            <person name="Shue B.C."/>
            <person name="Zheng X.H."/>
            <person name="Zhong F."/>
            <person name="Delcher A.L."/>
            <person name="Huson D.H."/>
            <person name="Kravitz S.A."/>
            <person name="Mouchard L."/>
            <person name="Reinert K."/>
            <person name="Remington K.A."/>
            <person name="Clark A.G."/>
            <person name="Waterman M.S."/>
            <person name="Eichler E.E."/>
            <person name="Adams M.D."/>
            <person name="Hunkapiller M.W."/>
            <person name="Myers E.W."/>
            <person name="Venter J.C."/>
        </authorList>
    </citation>
    <scope>NUCLEOTIDE SEQUENCE [LARGE SCALE GENOMIC DNA]</scope>
</reference>
<reference key="7">
    <citation type="journal article" date="2004" name="Genome Res.">
        <title>The status, quality, and expansion of the NIH full-length cDNA project: the Mammalian Gene Collection (MGC).</title>
        <authorList>
            <consortium name="The MGC Project Team"/>
        </authorList>
    </citation>
    <scope>NUCLEOTIDE SEQUENCE [LARGE SCALE MRNA]</scope>
    <source>
        <tissue>Eye</tissue>
    </source>
</reference>
<reference key="8">
    <citation type="journal article" date="1993" name="Genes Dev.">
        <title>Multiple functional domains of human transcription factor IIB: distinct interactions with two general transcription factors and RNA polymerase II.</title>
        <authorList>
            <person name="Ha I."/>
            <person name="Roberts S."/>
            <person name="Maldonado E."/>
            <person name="Sun X."/>
            <person name="Kim L.U."/>
            <person name="Green M."/>
            <person name="Reinberg D."/>
        </authorList>
    </citation>
    <scope>INTERACTION WITH GTF2B</scope>
</reference>
<reference key="9">
    <citation type="journal article" date="1996" name="J. Biol. Chem.">
        <title>RNA polymerase II-associated protein (RAP) 74 binds transcription factor (TF) IIB and blocks TFIIB-RAP30 binding.</title>
        <authorList>
            <person name="Fang S.M."/>
            <person name="Burton Z.F."/>
        </authorList>
    </citation>
    <scope>INTERACTION WITH GTF2B</scope>
</reference>
<reference key="10">
    <citation type="journal article" date="1999" name="Mol. Cell. Biol.">
        <title>Tat-SF1 protein associates with RAP30 and human SPT5 proteins.</title>
        <authorList>
            <person name="Kim J.B."/>
            <person name="Yamaguchi Y."/>
            <person name="Wada T."/>
            <person name="Handa H."/>
            <person name="Sharp P.A."/>
        </authorList>
    </citation>
    <scope>INTERACTION WITH HTATSF1</scope>
    <scope>SUBCELLULAR LOCATION</scope>
</reference>
<reference key="11">
    <citation type="journal article" date="2003" name="Cell Res.">
        <title>Interaction with general transcription factor IIF (TFIIF) is required for the suppression of activated transcription by RPB5-mediating protein (RMP).</title>
        <authorList>
            <person name="Wei W."/>
            <person name="Gu J.X."/>
            <person name="Zhu C.Q."/>
            <person name="Sun F.Y."/>
            <person name="Dorjsuren D."/>
            <person name="Lin Y."/>
            <person name="Murakami S."/>
        </authorList>
    </citation>
    <scope>INTERACTION WITH URI1</scope>
</reference>
<reference key="12">
    <citation type="journal article" date="2008" name="Proc. Natl. Acad. Sci. U.S.A.">
        <title>A quantitative atlas of mitotic phosphorylation.</title>
        <authorList>
            <person name="Dephoure N."/>
            <person name="Zhou C."/>
            <person name="Villen J."/>
            <person name="Beausoleil S.A."/>
            <person name="Bakalarski C.E."/>
            <person name="Elledge S.J."/>
            <person name="Gygi S.P."/>
        </authorList>
    </citation>
    <scope>PHOSPHORYLATION [LARGE SCALE ANALYSIS] AT SER-142</scope>
    <scope>IDENTIFICATION BY MASS SPECTROMETRY [LARGE SCALE ANALYSIS]</scope>
    <source>
        <tissue>Cervix carcinoma</tissue>
    </source>
</reference>
<reference key="13">
    <citation type="journal article" date="2009" name="Anal. Chem.">
        <title>Lys-N and trypsin cover complementary parts of the phosphoproteome in a refined SCX-based approach.</title>
        <authorList>
            <person name="Gauci S."/>
            <person name="Helbig A.O."/>
            <person name="Slijper M."/>
            <person name="Krijgsveld J."/>
            <person name="Heck A.J."/>
            <person name="Mohammed S."/>
        </authorList>
    </citation>
    <scope>ACETYLATION [LARGE SCALE ANALYSIS] AT ALA-2</scope>
    <scope>CLEAVAGE OF INITIATOR METHIONINE [LARGE SCALE ANALYSIS]</scope>
    <scope>IDENTIFICATION BY MASS SPECTROMETRY [LARGE SCALE ANALYSIS]</scope>
</reference>
<reference key="14">
    <citation type="journal article" date="2009" name="Science">
        <title>Lysine acetylation targets protein complexes and co-regulates major cellular functions.</title>
        <authorList>
            <person name="Choudhary C."/>
            <person name="Kumar C."/>
            <person name="Gnad F."/>
            <person name="Nielsen M.L."/>
            <person name="Rehman M."/>
            <person name="Walther T.C."/>
            <person name="Olsen J.V."/>
            <person name="Mann M."/>
        </authorList>
    </citation>
    <scope>ACETYLATION [LARGE SCALE ANALYSIS] AT LYS-22; LYS-33 AND LYS-137</scope>
    <scope>IDENTIFICATION BY MASS SPECTROMETRY [LARGE SCALE ANALYSIS]</scope>
</reference>
<reference key="15">
    <citation type="journal article" date="2010" name="Sci. Signal.">
        <title>Quantitative phosphoproteomics reveals widespread full phosphorylation site occupancy during mitosis.</title>
        <authorList>
            <person name="Olsen J.V."/>
            <person name="Vermeulen M."/>
            <person name="Santamaria A."/>
            <person name="Kumar C."/>
            <person name="Miller M.L."/>
            <person name="Jensen L.J."/>
            <person name="Gnad F."/>
            <person name="Cox J."/>
            <person name="Jensen T.S."/>
            <person name="Nigg E.A."/>
            <person name="Brunak S."/>
            <person name="Mann M."/>
        </authorList>
    </citation>
    <scope>PHOSPHORYLATION [LARGE SCALE ANALYSIS] AT SER-248</scope>
    <scope>IDENTIFICATION BY MASS SPECTROMETRY [LARGE SCALE ANALYSIS]</scope>
    <source>
        <tissue>Cervix carcinoma</tissue>
    </source>
</reference>
<reference key="16">
    <citation type="journal article" date="2011" name="BMC Syst. Biol.">
        <title>Initial characterization of the human central proteome.</title>
        <authorList>
            <person name="Burkard T.R."/>
            <person name="Planyavsky M."/>
            <person name="Kaupe I."/>
            <person name="Breitwieser F.P."/>
            <person name="Buerckstuemmer T."/>
            <person name="Bennett K.L."/>
            <person name="Superti-Furga G."/>
            <person name="Colinge J."/>
        </authorList>
    </citation>
    <scope>IDENTIFICATION BY MASS SPECTROMETRY [LARGE SCALE ANALYSIS]</scope>
</reference>
<reference key="17">
    <citation type="journal article" date="1998" name="Proc. Natl. Acad. Sci. U.S.A.">
        <title>Structural homology between the Rap30 DNA-binding domain and linker histone H5: implications for preinitiation complex assembly.</title>
        <authorList>
            <person name="Groft C.M."/>
            <person name="Uljon S.N."/>
            <person name="Wang R."/>
            <person name="Werner M.H."/>
        </authorList>
    </citation>
    <scope>STRUCTURE BY NMR OF 175-243</scope>
</reference>
<reference key="18">
    <citation type="journal article" date="2016" name="Nature">
        <title>Near-atomic resolution visualization of human transcription promoter opening.</title>
        <authorList>
            <person name="He Y."/>
            <person name="Yan C."/>
            <person name="Fang J."/>
            <person name="Inouye C."/>
            <person name="Tjian R."/>
            <person name="Ivanov I."/>
            <person name="Nogales E."/>
        </authorList>
    </citation>
    <scope>STRUCTURE BY ELECTRON MICROSCOPY (3.90 ANGSTROMS) IN COMPLEX WITH PROMOTER DNA</scope>
    <scope>SUBUNIT</scope>
</reference>
<keyword id="KW-0002">3D-structure</keyword>
<keyword id="KW-0007">Acetylation</keyword>
<keyword id="KW-0903">Direct protein sequencing</keyword>
<keyword id="KW-0238">DNA-binding</keyword>
<keyword id="KW-0539">Nucleus</keyword>
<keyword id="KW-0597">Phosphoprotein</keyword>
<keyword id="KW-1267">Proteomics identification</keyword>
<keyword id="KW-1185">Reference proteome</keyword>
<keyword id="KW-0804">Transcription</keyword>
<keyword id="KW-0805">Transcription regulation</keyword>
<organism>
    <name type="scientific">Homo sapiens</name>
    <name type="common">Human</name>
    <dbReference type="NCBI Taxonomy" id="9606"/>
    <lineage>
        <taxon>Eukaryota</taxon>
        <taxon>Metazoa</taxon>
        <taxon>Chordata</taxon>
        <taxon>Craniata</taxon>
        <taxon>Vertebrata</taxon>
        <taxon>Euteleostomi</taxon>
        <taxon>Mammalia</taxon>
        <taxon>Eutheria</taxon>
        <taxon>Euarchontoglires</taxon>
        <taxon>Primates</taxon>
        <taxon>Haplorrhini</taxon>
        <taxon>Catarrhini</taxon>
        <taxon>Hominidae</taxon>
        <taxon>Homo</taxon>
    </lineage>
</organism>
<feature type="initiator methionine" description="Removed" evidence="12">
    <location>
        <position position="1"/>
    </location>
</feature>
<feature type="chain" id="PRO_0000211235" description="General transcription factor IIF subunit 2">
    <location>
        <begin position="2"/>
        <end position="249"/>
    </location>
</feature>
<feature type="binding site" evidence="5 10">
    <location>
        <position position="227"/>
    </location>
    <ligand>
        <name>DNA</name>
        <dbReference type="ChEBI" id="CHEBI:16991"/>
    </ligand>
</feature>
<feature type="binding site" evidence="5 10">
    <location>
        <position position="229"/>
    </location>
    <ligand>
        <name>DNA</name>
        <dbReference type="ChEBI" id="CHEBI:16991"/>
    </ligand>
</feature>
<feature type="modified residue" description="N-acetylalanine" evidence="12">
    <location>
        <position position="2"/>
    </location>
</feature>
<feature type="modified residue" description="N6-acetyllysine" evidence="13">
    <location>
        <position position="22"/>
    </location>
</feature>
<feature type="modified residue" description="N6-acetyllysine" evidence="13">
    <location>
        <position position="33"/>
    </location>
</feature>
<feature type="modified residue" description="N6-acetyllysine" evidence="13">
    <location>
        <position position="137"/>
    </location>
</feature>
<feature type="modified residue" description="Phosphoserine" evidence="11">
    <location>
        <position position="142"/>
    </location>
</feature>
<feature type="modified residue" description="Phosphoserine" evidence="14">
    <location>
        <position position="248"/>
    </location>
</feature>
<feature type="strand" evidence="15">
    <location>
        <begin position="6"/>
        <end position="8"/>
    </location>
</feature>
<feature type="helix" evidence="15">
    <location>
        <begin position="10"/>
        <end position="13"/>
    </location>
</feature>
<feature type="strand" evidence="15">
    <location>
        <begin position="17"/>
        <end position="24"/>
    </location>
</feature>
<feature type="helix" evidence="15">
    <location>
        <begin position="25"/>
        <end position="31"/>
    </location>
</feature>
<feature type="strand" evidence="15">
    <location>
        <begin position="39"/>
        <end position="48"/>
    </location>
</feature>
<feature type="strand" evidence="15">
    <location>
        <begin position="51"/>
        <end position="58"/>
    </location>
</feature>
<feature type="helix" evidence="15">
    <location>
        <begin position="60"/>
        <end position="63"/>
    </location>
</feature>
<feature type="strand" evidence="15">
    <location>
        <begin position="80"/>
        <end position="86"/>
    </location>
</feature>
<feature type="strand" evidence="15">
    <location>
        <begin position="91"/>
        <end position="99"/>
    </location>
</feature>
<feature type="strand" evidence="15">
    <location>
        <begin position="104"/>
        <end position="116"/>
    </location>
</feature>
<feature type="helix" evidence="16">
    <location>
        <begin position="123"/>
        <end position="136"/>
    </location>
</feature>
<feature type="strand" evidence="16">
    <location>
        <begin position="143"/>
        <end position="147"/>
    </location>
</feature>
<feature type="strand" evidence="17">
    <location>
        <begin position="151"/>
        <end position="153"/>
    </location>
</feature>
<feature type="helix" evidence="16">
    <location>
        <begin position="160"/>
        <end position="172"/>
    </location>
</feature>
<feature type="helix" evidence="16">
    <location>
        <begin position="180"/>
        <end position="193"/>
    </location>
</feature>
<feature type="strand" evidence="16">
    <location>
        <begin position="195"/>
        <end position="197"/>
    </location>
</feature>
<feature type="helix" evidence="16">
    <location>
        <begin position="199"/>
        <end position="206"/>
    </location>
</feature>
<feature type="helix" evidence="16">
    <location>
        <begin position="210"/>
        <end position="220"/>
    </location>
</feature>
<feature type="strand" evidence="16">
    <location>
        <begin position="222"/>
        <end position="224"/>
    </location>
</feature>
<feature type="strand" evidence="16">
    <location>
        <begin position="227"/>
        <end position="229"/>
    </location>
</feature>
<feature type="strand" evidence="16">
    <location>
        <begin position="232"/>
        <end position="234"/>
    </location>
</feature>
<dbReference type="EMBL" id="X16901">
    <property type="protein sequence ID" value="CAA34775.1"/>
    <property type="molecule type" value="mRNA"/>
</dbReference>
<dbReference type="EMBL" id="X59745">
    <property type="protein sequence ID" value="CAA42419.1"/>
    <property type="molecule type" value="mRNA"/>
</dbReference>
<dbReference type="EMBL" id="AK291545">
    <property type="protein sequence ID" value="BAF84234.1"/>
    <property type="molecule type" value="mRNA"/>
</dbReference>
<dbReference type="EMBL" id="BT019525">
    <property type="protein sequence ID" value="AAV38332.1"/>
    <property type="molecule type" value="mRNA"/>
</dbReference>
<dbReference type="EMBL" id="AL138963">
    <property type="status" value="NOT_ANNOTATED_CDS"/>
    <property type="molecule type" value="Genomic_DNA"/>
</dbReference>
<dbReference type="EMBL" id="AL138693">
    <property type="status" value="NOT_ANNOTATED_CDS"/>
    <property type="molecule type" value="Genomic_DNA"/>
</dbReference>
<dbReference type="EMBL" id="CH471075">
    <property type="protein sequence ID" value="EAX08728.1"/>
    <property type="molecule type" value="Genomic_DNA"/>
</dbReference>
<dbReference type="EMBL" id="BC001771">
    <property type="protein sequence ID" value="AAH01771.1"/>
    <property type="molecule type" value="mRNA"/>
</dbReference>
<dbReference type="CCDS" id="CCDS9395.1"/>
<dbReference type="PIR" id="S06141">
    <property type="entry name" value="S06141"/>
</dbReference>
<dbReference type="PIR" id="S18677">
    <property type="entry name" value="S18677"/>
</dbReference>
<dbReference type="RefSeq" id="NP_004119.1">
    <property type="nucleotide sequence ID" value="NM_004128.3"/>
</dbReference>
<dbReference type="PDB" id="1BBY">
    <property type="method" value="NMR"/>
    <property type="chains" value="A=175-243"/>
</dbReference>
<dbReference type="PDB" id="1F3U">
    <property type="method" value="X-ray"/>
    <property type="resolution" value="1.70 A"/>
    <property type="chains" value="A/C/E/G=2-119"/>
</dbReference>
<dbReference type="PDB" id="2BBY">
    <property type="method" value="NMR"/>
    <property type="chains" value="A=175-243"/>
</dbReference>
<dbReference type="PDB" id="5IY6">
    <property type="method" value="EM"/>
    <property type="resolution" value="7.20 A"/>
    <property type="chains" value="T=1-249"/>
</dbReference>
<dbReference type="PDB" id="5IY7">
    <property type="method" value="EM"/>
    <property type="resolution" value="8.60 A"/>
    <property type="chains" value="T=1-249"/>
</dbReference>
<dbReference type="PDB" id="5IY8">
    <property type="method" value="EM"/>
    <property type="resolution" value="7.90 A"/>
    <property type="chains" value="T=1-249"/>
</dbReference>
<dbReference type="PDB" id="5IY9">
    <property type="method" value="EM"/>
    <property type="resolution" value="6.30 A"/>
    <property type="chains" value="T=1-249"/>
</dbReference>
<dbReference type="PDB" id="5IYA">
    <property type="method" value="EM"/>
    <property type="resolution" value="5.40 A"/>
    <property type="chains" value="T=1-249"/>
</dbReference>
<dbReference type="PDB" id="5IYB">
    <property type="method" value="EM"/>
    <property type="resolution" value="3.90 A"/>
    <property type="chains" value="T=1-249"/>
</dbReference>
<dbReference type="PDB" id="5IYC">
    <property type="method" value="EM"/>
    <property type="resolution" value="3.90 A"/>
    <property type="chains" value="T=1-249"/>
</dbReference>
<dbReference type="PDB" id="5IYD">
    <property type="method" value="EM"/>
    <property type="resolution" value="3.90 A"/>
    <property type="chains" value="T=1-249"/>
</dbReference>
<dbReference type="PDB" id="6O9L">
    <property type="method" value="EM"/>
    <property type="resolution" value="7.20 A"/>
    <property type="chains" value="T=1-249"/>
</dbReference>
<dbReference type="PDB" id="7EDX">
    <property type="method" value="EM"/>
    <property type="resolution" value="4.50 A"/>
    <property type="chains" value="T=1-249"/>
</dbReference>
<dbReference type="PDB" id="7EG7">
    <property type="method" value="EM"/>
    <property type="resolution" value="6.20 A"/>
    <property type="chains" value="T=1-249"/>
</dbReference>
<dbReference type="PDB" id="7EG8">
    <property type="method" value="EM"/>
    <property type="resolution" value="7.40 A"/>
    <property type="chains" value="T=1-249"/>
</dbReference>
<dbReference type="PDB" id="7EG9">
    <property type="method" value="EM"/>
    <property type="resolution" value="3.70 A"/>
    <property type="chains" value="T=1-249"/>
</dbReference>
<dbReference type="PDB" id="7EGA">
    <property type="method" value="EM"/>
    <property type="resolution" value="4.10 A"/>
    <property type="chains" value="T=1-249"/>
</dbReference>
<dbReference type="PDB" id="7EGB">
    <property type="method" value="EM"/>
    <property type="resolution" value="3.30 A"/>
    <property type="chains" value="T=1-249"/>
</dbReference>
<dbReference type="PDB" id="7EGC">
    <property type="method" value="EM"/>
    <property type="resolution" value="3.90 A"/>
    <property type="chains" value="T=1-249"/>
</dbReference>
<dbReference type="PDB" id="7ENA">
    <property type="method" value="EM"/>
    <property type="resolution" value="4.07 A"/>
    <property type="chains" value="FB=1-249"/>
</dbReference>
<dbReference type="PDB" id="7ENC">
    <property type="method" value="EM"/>
    <property type="resolution" value="4.13 A"/>
    <property type="chains" value="FB=1-249"/>
</dbReference>
<dbReference type="PDB" id="7LBM">
    <property type="method" value="EM"/>
    <property type="resolution" value="4.80 A"/>
    <property type="chains" value="T=1-249"/>
</dbReference>
<dbReference type="PDB" id="7NVR">
    <property type="method" value="EM"/>
    <property type="resolution" value="4.50 A"/>
    <property type="chains" value="R=1-249"/>
</dbReference>
<dbReference type="PDB" id="7NVS">
    <property type="method" value="EM"/>
    <property type="resolution" value="2.80 A"/>
    <property type="chains" value="R=1-249"/>
</dbReference>
<dbReference type="PDB" id="7NVT">
    <property type="method" value="EM"/>
    <property type="resolution" value="2.90 A"/>
    <property type="chains" value="R=1-249"/>
</dbReference>
<dbReference type="PDB" id="7NVU">
    <property type="method" value="EM"/>
    <property type="resolution" value="2.50 A"/>
    <property type="chains" value="R=1-249"/>
</dbReference>
<dbReference type="PDB" id="7NVY">
    <property type="method" value="EM"/>
    <property type="resolution" value="7.30 A"/>
    <property type="chains" value="R=1-249"/>
</dbReference>
<dbReference type="PDB" id="7NVZ">
    <property type="method" value="EM"/>
    <property type="resolution" value="7.20 A"/>
    <property type="chains" value="R=1-249"/>
</dbReference>
<dbReference type="PDB" id="7NW0">
    <property type="method" value="EM"/>
    <property type="resolution" value="6.60 A"/>
    <property type="chains" value="R=1-249"/>
</dbReference>
<dbReference type="PDB" id="7ZWD">
    <property type="method" value="EM"/>
    <property type="resolution" value="3.00 A"/>
    <property type="chains" value="R=1-249"/>
</dbReference>
<dbReference type="PDB" id="7ZX7">
    <property type="method" value="EM"/>
    <property type="resolution" value="3.40 A"/>
    <property type="chains" value="R=1-249"/>
</dbReference>
<dbReference type="PDB" id="7ZX8">
    <property type="method" value="EM"/>
    <property type="resolution" value="3.00 A"/>
    <property type="chains" value="R=1-249"/>
</dbReference>
<dbReference type="PDB" id="8BVW">
    <property type="method" value="EM"/>
    <property type="resolution" value="4.00 A"/>
    <property type="chains" value="R=1-249"/>
</dbReference>
<dbReference type="PDB" id="8BYQ">
    <property type="method" value="EM"/>
    <property type="resolution" value="4.10 A"/>
    <property type="chains" value="R=1-249"/>
</dbReference>
<dbReference type="PDB" id="8BZ1">
    <property type="method" value="EM"/>
    <property type="resolution" value="3.80 A"/>
    <property type="chains" value="R=1-249"/>
</dbReference>
<dbReference type="PDB" id="8GXQ">
    <property type="method" value="EM"/>
    <property type="resolution" value="5.04 A"/>
    <property type="chains" value="FB=1-249"/>
</dbReference>
<dbReference type="PDB" id="8GXS">
    <property type="method" value="EM"/>
    <property type="resolution" value="4.16 A"/>
    <property type="chains" value="FB=1-249"/>
</dbReference>
<dbReference type="PDB" id="8S51">
    <property type="method" value="EM"/>
    <property type="resolution" value="3.10 A"/>
    <property type="chains" value="R=1-249"/>
</dbReference>
<dbReference type="PDB" id="8S52">
    <property type="method" value="EM"/>
    <property type="resolution" value="2.90 A"/>
    <property type="chains" value="R=1-249"/>
</dbReference>
<dbReference type="PDB" id="8S54">
    <property type="method" value="EM"/>
    <property type="resolution" value="3.40 A"/>
    <property type="chains" value="R=1-249"/>
</dbReference>
<dbReference type="PDB" id="8S55">
    <property type="method" value="EM"/>
    <property type="resolution" value="3.40 A"/>
    <property type="chains" value="R=1-249"/>
</dbReference>
<dbReference type="PDB" id="8S5N">
    <property type="method" value="EM"/>
    <property type="resolution" value="3.40 A"/>
    <property type="chains" value="R=1-249"/>
</dbReference>
<dbReference type="PDB" id="8WAK">
    <property type="method" value="EM"/>
    <property type="resolution" value="5.47 A"/>
    <property type="chains" value="T=1-249"/>
</dbReference>
<dbReference type="PDB" id="8WAL">
    <property type="method" value="EM"/>
    <property type="resolution" value="8.52 A"/>
    <property type="chains" value="T=1-249"/>
</dbReference>
<dbReference type="PDB" id="8WAN">
    <property type="method" value="EM"/>
    <property type="resolution" value="6.07 A"/>
    <property type="chains" value="T=1-249"/>
</dbReference>
<dbReference type="PDB" id="8WAO">
    <property type="method" value="EM"/>
    <property type="resolution" value="6.40 A"/>
    <property type="chains" value="T=1-249"/>
</dbReference>
<dbReference type="PDB" id="8WAP">
    <property type="method" value="EM"/>
    <property type="resolution" value="5.85 A"/>
    <property type="chains" value="T=1-249"/>
</dbReference>
<dbReference type="PDB" id="8WAQ">
    <property type="method" value="EM"/>
    <property type="resolution" value="6.29 A"/>
    <property type="chains" value="T=1-249"/>
</dbReference>
<dbReference type="PDB" id="8WAR">
    <property type="method" value="EM"/>
    <property type="resolution" value="7.20 A"/>
    <property type="chains" value="T=1-249"/>
</dbReference>
<dbReference type="PDB" id="8WAS">
    <property type="method" value="EM"/>
    <property type="resolution" value="6.13 A"/>
    <property type="chains" value="T=1-249"/>
</dbReference>
<dbReference type="PDB" id="8WAT">
    <property type="method" value="EM"/>
    <property type="resolution" value="2.82 A"/>
    <property type="chains" value="T=1-249"/>
</dbReference>
<dbReference type="PDB" id="8WAU">
    <property type="method" value="EM"/>
    <property type="resolution" value="2.78 A"/>
    <property type="chains" value="T=1-249"/>
</dbReference>
<dbReference type="PDB" id="8WAV">
    <property type="method" value="EM"/>
    <property type="resolution" value="2.72 A"/>
    <property type="chains" value="T=1-249"/>
</dbReference>
<dbReference type="PDB" id="8WAW">
    <property type="method" value="EM"/>
    <property type="resolution" value="3.02 A"/>
    <property type="chains" value="T=1-249"/>
</dbReference>
<dbReference type="PDB" id="8WAX">
    <property type="method" value="EM"/>
    <property type="resolution" value="2.75 A"/>
    <property type="chains" value="T=1-249"/>
</dbReference>
<dbReference type="PDB" id="8WAY">
    <property type="method" value="EM"/>
    <property type="resolution" value="2.85 A"/>
    <property type="chains" value="T=1-249"/>
</dbReference>
<dbReference type="PDB" id="8WAZ">
    <property type="method" value="EM"/>
    <property type="resolution" value="2.76 A"/>
    <property type="chains" value="T=1-249"/>
</dbReference>
<dbReference type="PDB" id="8WB0">
    <property type="method" value="EM"/>
    <property type="resolution" value="2.94 A"/>
    <property type="chains" value="T=1-249"/>
</dbReference>
<dbReference type="PDBsum" id="1BBY"/>
<dbReference type="PDBsum" id="1F3U"/>
<dbReference type="PDBsum" id="2BBY"/>
<dbReference type="PDBsum" id="5IY6"/>
<dbReference type="PDBsum" id="5IY7"/>
<dbReference type="PDBsum" id="5IY8"/>
<dbReference type="PDBsum" id="5IY9"/>
<dbReference type="PDBsum" id="5IYA"/>
<dbReference type="PDBsum" id="5IYB"/>
<dbReference type="PDBsum" id="5IYC"/>
<dbReference type="PDBsum" id="5IYD"/>
<dbReference type="PDBsum" id="6O9L"/>
<dbReference type="PDBsum" id="7EDX"/>
<dbReference type="PDBsum" id="7EG7"/>
<dbReference type="PDBsum" id="7EG8"/>
<dbReference type="PDBsum" id="7EG9"/>
<dbReference type="PDBsum" id="7EGA"/>
<dbReference type="PDBsum" id="7EGB"/>
<dbReference type="PDBsum" id="7EGC"/>
<dbReference type="PDBsum" id="7ENA"/>
<dbReference type="PDBsum" id="7ENC"/>
<dbReference type="PDBsum" id="7LBM"/>
<dbReference type="PDBsum" id="7NVR"/>
<dbReference type="PDBsum" id="7NVS"/>
<dbReference type="PDBsum" id="7NVT"/>
<dbReference type="PDBsum" id="7NVU"/>
<dbReference type="PDBsum" id="7NVY"/>
<dbReference type="PDBsum" id="7NVZ"/>
<dbReference type="PDBsum" id="7NW0"/>
<dbReference type="PDBsum" id="7ZWD"/>
<dbReference type="PDBsum" id="7ZX7"/>
<dbReference type="PDBsum" id="7ZX8"/>
<dbReference type="PDBsum" id="8BVW"/>
<dbReference type="PDBsum" id="8BYQ"/>
<dbReference type="PDBsum" id="8BZ1"/>
<dbReference type="PDBsum" id="8GXQ"/>
<dbReference type="PDBsum" id="8GXS"/>
<dbReference type="PDBsum" id="8S51"/>
<dbReference type="PDBsum" id="8S52"/>
<dbReference type="PDBsum" id="8S54"/>
<dbReference type="PDBsum" id="8S55"/>
<dbReference type="PDBsum" id="8S5N"/>
<dbReference type="PDBsum" id="8WAK"/>
<dbReference type="PDBsum" id="8WAL"/>
<dbReference type="PDBsum" id="8WAN"/>
<dbReference type="PDBsum" id="8WAO"/>
<dbReference type="PDBsum" id="8WAP"/>
<dbReference type="PDBsum" id="8WAQ"/>
<dbReference type="PDBsum" id="8WAR"/>
<dbReference type="PDBsum" id="8WAS"/>
<dbReference type="PDBsum" id="8WAT"/>
<dbReference type="PDBsum" id="8WAU"/>
<dbReference type="PDBsum" id="8WAV"/>
<dbReference type="PDBsum" id="8WAW"/>
<dbReference type="PDBsum" id="8WAX"/>
<dbReference type="PDBsum" id="8WAY"/>
<dbReference type="PDBsum" id="8WAZ"/>
<dbReference type="PDBsum" id="8WB0"/>
<dbReference type="EMDB" id="EMD-12610"/>
<dbReference type="EMDB" id="EMD-12611"/>
<dbReference type="EMDB" id="EMD-12612"/>
<dbReference type="EMDB" id="EMD-12613"/>
<dbReference type="EMDB" id="EMD-12617"/>
<dbReference type="EMDB" id="EMD-12618"/>
<dbReference type="EMDB" id="EMD-12619"/>
<dbReference type="EMDB" id="EMD-14997"/>
<dbReference type="EMDB" id="EMD-15006"/>
<dbReference type="EMDB" id="EMD-15007"/>
<dbReference type="EMDB" id="EMD-16274"/>
<dbReference type="EMDB" id="EMD-16331"/>
<dbReference type="EMDB" id="EMD-16335"/>
<dbReference type="EMDB" id="EMD-19718"/>
<dbReference type="EMDB" id="EMD-19719"/>
<dbReference type="EMDB" id="EMD-19720"/>
<dbReference type="EMDB" id="EMD-19726"/>
<dbReference type="EMDB" id="EMD-19743"/>
<dbReference type="EMDB" id="EMD-23255"/>
<dbReference type="EMDB" id="EMD-31075"/>
<dbReference type="EMDB" id="EMD-31107"/>
<dbReference type="EMDB" id="EMD-31108"/>
<dbReference type="EMDB" id="EMD-31109"/>
<dbReference type="EMDB" id="EMD-31110"/>
<dbReference type="EMDB" id="EMD-31111"/>
<dbReference type="EMDB" id="EMD-31112"/>
<dbReference type="EMDB" id="EMD-31204"/>
<dbReference type="EMDB" id="EMD-31207"/>
<dbReference type="EMDB" id="EMD-34359"/>
<dbReference type="EMDB" id="EMD-34360"/>
<dbReference type="EMDB" id="EMD-37395"/>
<dbReference type="EMDB" id="EMD-37396"/>
<dbReference type="EMDB" id="EMD-37398"/>
<dbReference type="EMDB" id="EMD-37399"/>
<dbReference type="EMDB" id="EMD-37400"/>
<dbReference type="EMDB" id="EMD-37401"/>
<dbReference type="EMDB" id="EMD-37402"/>
<dbReference type="EMDB" id="EMD-37403"/>
<dbReference type="EMDB" id="EMD-37404"/>
<dbReference type="EMDB" id="EMD-37405"/>
<dbReference type="EMDB" id="EMD-37406"/>
<dbReference type="EMDB" id="EMD-37407"/>
<dbReference type="EMDB" id="EMD-37408"/>
<dbReference type="EMDB" id="EMD-37409"/>
<dbReference type="EMDB" id="EMD-37410"/>
<dbReference type="EMDB" id="EMD-37411"/>
<dbReference type="EMDB" id="EMD-8132"/>
<dbReference type="EMDB" id="EMD-8133"/>
<dbReference type="EMDB" id="EMD-8134"/>
<dbReference type="EMDB" id="EMD-8135"/>
<dbReference type="EMDB" id="EMD-8136"/>
<dbReference type="EMDB" id="EMD-8137"/>
<dbReference type="EMDB" id="EMD-8138"/>
<dbReference type="SMR" id="P13984"/>
<dbReference type="BioGRID" id="109218">
    <property type="interactions" value="145"/>
</dbReference>
<dbReference type="ComplexPortal" id="CPX-79">
    <property type="entry name" value="General transcription factor TFIIF complex"/>
</dbReference>
<dbReference type="CORUM" id="P13984"/>
<dbReference type="DIP" id="DIP-41680N"/>
<dbReference type="FunCoup" id="P13984">
    <property type="interactions" value="2588"/>
</dbReference>
<dbReference type="IntAct" id="P13984">
    <property type="interactions" value="92"/>
</dbReference>
<dbReference type="MINT" id="P13984"/>
<dbReference type="STRING" id="9606.ENSP00000340823"/>
<dbReference type="GlyGen" id="P13984">
    <property type="glycosylation" value="1 site, 1 O-linked glycan (1 site)"/>
</dbReference>
<dbReference type="iPTMnet" id="P13984"/>
<dbReference type="PhosphoSitePlus" id="P13984"/>
<dbReference type="BioMuta" id="GTF2F2"/>
<dbReference type="DMDM" id="464519"/>
<dbReference type="jPOST" id="P13984"/>
<dbReference type="MassIVE" id="P13984"/>
<dbReference type="PaxDb" id="9606-ENSP00000340823"/>
<dbReference type="PeptideAtlas" id="P13984"/>
<dbReference type="ProteomicsDB" id="53012"/>
<dbReference type="Pumba" id="P13984"/>
<dbReference type="Antibodypedia" id="1838">
    <property type="antibodies" value="273 antibodies from 30 providers"/>
</dbReference>
<dbReference type="DNASU" id="2963"/>
<dbReference type="Ensembl" id="ENST00000340473.8">
    <property type="protein sequence ID" value="ENSP00000340823.6"/>
    <property type="gene ID" value="ENSG00000188342.13"/>
</dbReference>
<dbReference type="GeneID" id="2963"/>
<dbReference type="KEGG" id="hsa:2963"/>
<dbReference type="MANE-Select" id="ENST00000340473.8">
    <property type="protein sequence ID" value="ENSP00000340823.6"/>
    <property type="RefSeq nucleotide sequence ID" value="NM_004128.3"/>
    <property type="RefSeq protein sequence ID" value="NP_004119.1"/>
</dbReference>
<dbReference type="UCSC" id="uc001uzw.4">
    <property type="organism name" value="human"/>
</dbReference>
<dbReference type="AGR" id="HGNC:4653"/>
<dbReference type="CTD" id="2963"/>
<dbReference type="DisGeNET" id="2963"/>
<dbReference type="GeneCards" id="GTF2F2"/>
<dbReference type="HGNC" id="HGNC:4653">
    <property type="gene designation" value="GTF2F2"/>
</dbReference>
<dbReference type="HPA" id="ENSG00000188342">
    <property type="expression patterns" value="Low tissue specificity"/>
</dbReference>
<dbReference type="MIM" id="189969">
    <property type="type" value="gene"/>
</dbReference>
<dbReference type="neXtProt" id="NX_P13984"/>
<dbReference type="OpenTargets" id="ENSG00000188342"/>
<dbReference type="PharmGKB" id="PA29039"/>
<dbReference type="VEuPathDB" id="HostDB:ENSG00000188342"/>
<dbReference type="eggNOG" id="KOG2905">
    <property type="taxonomic scope" value="Eukaryota"/>
</dbReference>
<dbReference type="GeneTree" id="ENSGT00390000016051"/>
<dbReference type="HOGENOM" id="CLU_047858_1_0_1"/>
<dbReference type="InParanoid" id="P13984"/>
<dbReference type="OMA" id="PIADNCY"/>
<dbReference type="OrthoDB" id="26094at2759"/>
<dbReference type="PAN-GO" id="P13984">
    <property type="GO annotations" value="2 GO annotations based on evolutionary models"/>
</dbReference>
<dbReference type="PhylomeDB" id="P13984"/>
<dbReference type="TreeFam" id="TF314290"/>
<dbReference type="PathwayCommons" id="P13984"/>
<dbReference type="Reactome" id="R-HSA-112382">
    <property type="pathway name" value="Formation of RNA Pol II elongation complex"/>
</dbReference>
<dbReference type="Reactome" id="R-HSA-113418">
    <property type="pathway name" value="Formation of the Early Elongation Complex"/>
</dbReference>
<dbReference type="Reactome" id="R-HSA-167152">
    <property type="pathway name" value="Formation of HIV elongation complex in the absence of HIV Tat"/>
</dbReference>
<dbReference type="Reactome" id="R-HSA-167158">
    <property type="pathway name" value="Formation of the HIV-1 Early Elongation Complex"/>
</dbReference>
<dbReference type="Reactome" id="R-HSA-167160">
    <property type="pathway name" value="RNA Pol II CTD phosphorylation and interaction with CE during HIV infection"/>
</dbReference>
<dbReference type="Reactome" id="R-HSA-167161">
    <property type="pathway name" value="HIV Transcription Initiation"/>
</dbReference>
<dbReference type="Reactome" id="R-HSA-167162">
    <property type="pathway name" value="RNA Polymerase II HIV Promoter Escape"/>
</dbReference>
<dbReference type="Reactome" id="R-HSA-167172">
    <property type="pathway name" value="Transcription of the HIV genome"/>
</dbReference>
<dbReference type="Reactome" id="R-HSA-167200">
    <property type="pathway name" value="Formation of HIV-1 elongation complex containing HIV-1 Tat"/>
</dbReference>
<dbReference type="Reactome" id="R-HSA-167238">
    <property type="pathway name" value="Pausing and recovery of Tat-mediated HIV elongation"/>
</dbReference>
<dbReference type="Reactome" id="R-HSA-167242">
    <property type="pathway name" value="Abortive elongation of HIV-1 transcript in the absence of Tat"/>
</dbReference>
<dbReference type="Reactome" id="R-HSA-167243">
    <property type="pathway name" value="Tat-mediated HIV elongation arrest and recovery"/>
</dbReference>
<dbReference type="Reactome" id="R-HSA-167246">
    <property type="pathway name" value="Tat-mediated elongation of the HIV-1 transcript"/>
</dbReference>
<dbReference type="Reactome" id="R-HSA-167287">
    <property type="pathway name" value="HIV elongation arrest and recovery"/>
</dbReference>
<dbReference type="Reactome" id="R-HSA-167290">
    <property type="pathway name" value="Pausing and recovery of HIV elongation"/>
</dbReference>
<dbReference type="Reactome" id="R-HSA-168325">
    <property type="pathway name" value="Viral Messenger RNA Synthesis"/>
</dbReference>
<dbReference type="Reactome" id="R-HSA-674695">
    <property type="pathway name" value="RNA Polymerase II Pre-transcription Events"/>
</dbReference>
<dbReference type="Reactome" id="R-HSA-6796648">
    <property type="pathway name" value="TP53 Regulates Transcription of DNA Repair Genes"/>
</dbReference>
<dbReference type="Reactome" id="R-HSA-6803529">
    <property type="pathway name" value="FGFR2 alternative splicing"/>
</dbReference>
<dbReference type="Reactome" id="R-HSA-6807505">
    <property type="pathway name" value="RNA polymerase II transcribes snRNA genes"/>
</dbReference>
<dbReference type="Reactome" id="R-HSA-72086">
    <property type="pathway name" value="mRNA Capping"/>
</dbReference>
<dbReference type="Reactome" id="R-HSA-72163">
    <property type="pathway name" value="mRNA Splicing - Major Pathway"/>
</dbReference>
<dbReference type="Reactome" id="R-HSA-72165">
    <property type="pathway name" value="mRNA Splicing - Minor Pathway"/>
</dbReference>
<dbReference type="Reactome" id="R-HSA-72203">
    <property type="pathway name" value="Processing of Capped Intron-Containing Pre-mRNA"/>
</dbReference>
<dbReference type="Reactome" id="R-HSA-73776">
    <property type="pathway name" value="RNA Polymerase II Promoter Escape"/>
</dbReference>
<dbReference type="Reactome" id="R-HSA-73779">
    <property type="pathway name" value="RNA Polymerase II Transcription Pre-Initiation And Promoter Opening"/>
</dbReference>
<dbReference type="Reactome" id="R-HSA-75953">
    <property type="pathway name" value="RNA Polymerase II Transcription Initiation"/>
</dbReference>
<dbReference type="Reactome" id="R-HSA-75955">
    <property type="pathway name" value="RNA Polymerase II Transcription Elongation"/>
</dbReference>
<dbReference type="Reactome" id="R-HSA-76042">
    <property type="pathway name" value="RNA Polymerase II Transcription Initiation And Promoter Clearance"/>
</dbReference>
<dbReference type="Reactome" id="R-HSA-77075">
    <property type="pathway name" value="RNA Pol II CTD phosphorylation and interaction with CE"/>
</dbReference>
<dbReference type="Reactome" id="R-HSA-8851708">
    <property type="pathway name" value="Signaling by FGFR2 IIIa TM"/>
</dbReference>
<dbReference type="Reactome" id="R-HSA-9018519">
    <property type="pathway name" value="Estrogen-dependent gene expression"/>
</dbReference>
<dbReference type="SignaLink" id="P13984"/>
<dbReference type="SIGNOR" id="P13984"/>
<dbReference type="BioGRID-ORCS" id="2963">
    <property type="hits" value="643 hits in 1158 CRISPR screens"/>
</dbReference>
<dbReference type="CD-CODE" id="91857CE7">
    <property type="entry name" value="Nucleolus"/>
</dbReference>
<dbReference type="ChiTaRS" id="GTF2F2">
    <property type="organism name" value="human"/>
</dbReference>
<dbReference type="EvolutionaryTrace" id="P13984"/>
<dbReference type="GeneWiki" id="GTF2F2"/>
<dbReference type="GenomeRNAi" id="2963"/>
<dbReference type="Pharos" id="P13984">
    <property type="development level" value="Tbio"/>
</dbReference>
<dbReference type="PRO" id="PR:P13984"/>
<dbReference type="Proteomes" id="UP000005640">
    <property type="component" value="Chromosome 13"/>
</dbReference>
<dbReference type="RNAct" id="P13984">
    <property type="molecule type" value="protein"/>
</dbReference>
<dbReference type="Bgee" id="ENSG00000188342">
    <property type="expression patterns" value="Expressed in primordial germ cell in gonad and 199 other cell types or tissues"/>
</dbReference>
<dbReference type="ExpressionAtlas" id="P13984">
    <property type="expression patterns" value="baseline and differential"/>
</dbReference>
<dbReference type="GO" id="GO:0015630">
    <property type="term" value="C:microtubule cytoskeleton"/>
    <property type="evidence" value="ECO:0000314"/>
    <property type="project" value="HPA"/>
</dbReference>
<dbReference type="GO" id="GO:0005654">
    <property type="term" value="C:nucleoplasm"/>
    <property type="evidence" value="ECO:0000314"/>
    <property type="project" value="HPA"/>
</dbReference>
<dbReference type="GO" id="GO:0005634">
    <property type="term" value="C:nucleus"/>
    <property type="evidence" value="ECO:0000314"/>
    <property type="project" value="CAFA"/>
</dbReference>
<dbReference type="GO" id="GO:0005674">
    <property type="term" value="C:transcription factor TFIIF complex"/>
    <property type="evidence" value="ECO:0000353"/>
    <property type="project" value="ComplexPortal"/>
</dbReference>
<dbReference type="GO" id="GO:0003677">
    <property type="term" value="F:DNA binding"/>
    <property type="evidence" value="ECO:0007669"/>
    <property type="project" value="UniProtKB-KW"/>
</dbReference>
<dbReference type="GO" id="GO:0016251">
    <property type="term" value="F:RNA polymerase II general transcription initiation factor activity"/>
    <property type="evidence" value="ECO:0000250"/>
    <property type="project" value="ARUK-UCL"/>
</dbReference>
<dbReference type="GO" id="GO:0045944">
    <property type="term" value="P:positive regulation of transcription by RNA polymerase II"/>
    <property type="evidence" value="ECO:0000314"/>
    <property type="project" value="ComplexPortal"/>
</dbReference>
<dbReference type="GO" id="GO:0006366">
    <property type="term" value="P:transcription by RNA polymerase II"/>
    <property type="evidence" value="ECO:0000315"/>
    <property type="project" value="UniProtKB"/>
</dbReference>
<dbReference type="GO" id="GO:0006368">
    <property type="term" value="P:transcription elongation by RNA polymerase II"/>
    <property type="evidence" value="ECO:0000314"/>
    <property type="project" value="ComplexPortal"/>
</dbReference>
<dbReference type="GO" id="GO:0006367">
    <property type="term" value="P:transcription initiation at RNA polymerase II promoter"/>
    <property type="evidence" value="ECO:0000314"/>
    <property type="project" value="ComplexPortal"/>
</dbReference>
<dbReference type="CDD" id="cd07980">
    <property type="entry name" value="TFIIF_beta"/>
    <property type="match status" value="1"/>
</dbReference>
<dbReference type="FunFam" id="1.10.10.10:FF:000035">
    <property type="entry name" value="General transcription factor IIF subunit 2"/>
    <property type="match status" value="1"/>
</dbReference>
<dbReference type="Gene3D" id="1.10.10.10">
    <property type="entry name" value="Winged helix-like DNA-binding domain superfamily/Winged helix DNA-binding domain"/>
    <property type="match status" value="1"/>
</dbReference>
<dbReference type="InterPro" id="IPR003196">
    <property type="entry name" value="TFIIF_beta"/>
</dbReference>
<dbReference type="InterPro" id="IPR040450">
    <property type="entry name" value="TFIIF_beta_HTH"/>
</dbReference>
<dbReference type="InterPro" id="IPR040504">
    <property type="entry name" value="TFIIF_beta_N"/>
</dbReference>
<dbReference type="InterPro" id="IPR011039">
    <property type="entry name" value="TFIIF_interaction"/>
</dbReference>
<dbReference type="InterPro" id="IPR036388">
    <property type="entry name" value="WH-like_DNA-bd_sf"/>
</dbReference>
<dbReference type="InterPro" id="IPR036390">
    <property type="entry name" value="WH_DNA-bd_sf"/>
</dbReference>
<dbReference type="PANTHER" id="PTHR10445">
    <property type="entry name" value="GENERAL TRANSCRIPTION FACTOR IIF SUBUNIT 2"/>
    <property type="match status" value="1"/>
</dbReference>
<dbReference type="PANTHER" id="PTHR10445:SF0">
    <property type="entry name" value="GENERAL TRANSCRIPTION FACTOR IIF SUBUNIT 2"/>
    <property type="match status" value="1"/>
</dbReference>
<dbReference type="Pfam" id="PF02270">
    <property type="entry name" value="TFIIF_beta"/>
    <property type="match status" value="1"/>
</dbReference>
<dbReference type="Pfam" id="PF17683">
    <property type="entry name" value="TFIIF_beta_N"/>
    <property type="match status" value="1"/>
</dbReference>
<dbReference type="PIRSF" id="PIRSF015849">
    <property type="entry name" value="TFIIF-beta"/>
    <property type="match status" value="1"/>
</dbReference>
<dbReference type="SUPFAM" id="SSF50916">
    <property type="entry name" value="Rap30/74 interaction domains"/>
    <property type="match status" value="1"/>
</dbReference>
<dbReference type="SUPFAM" id="SSF46785">
    <property type="entry name" value="Winged helix' DNA-binding domain"/>
    <property type="match status" value="1"/>
</dbReference>
<proteinExistence type="evidence at protein level"/>
<gene>
    <name type="primary">GTF2F2</name>
    <name type="synonym">RAP30</name>
</gene>
<evidence type="ECO:0000250" key="1"/>
<evidence type="ECO:0000269" key="2">
    <source>
    </source>
</evidence>
<evidence type="ECO:0000269" key="3">
    <source>
    </source>
</evidence>
<evidence type="ECO:0000269" key="4">
    <source>
    </source>
</evidence>
<evidence type="ECO:0000269" key="5">
    <source>
    </source>
</evidence>
<evidence type="ECO:0000269" key="6">
    <source>
    </source>
</evidence>
<evidence type="ECO:0000269" key="7">
    <source>
    </source>
</evidence>
<evidence type="ECO:0000305" key="8"/>
<evidence type="ECO:0000305" key="9">
    <source>
    </source>
</evidence>
<evidence type="ECO:0007744" key="10">
    <source>
        <dbReference type="PDB" id="5IYD"/>
    </source>
</evidence>
<evidence type="ECO:0007744" key="11">
    <source>
    </source>
</evidence>
<evidence type="ECO:0007744" key="12">
    <source>
    </source>
</evidence>
<evidence type="ECO:0007744" key="13">
    <source>
    </source>
</evidence>
<evidence type="ECO:0007744" key="14">
    <source>
    </source>
</evidence>
<evidence type="ECO:0007829" key="15">
    <source>
        <dbReference type="PDB" id="1F3U"/>
    </source>
</evidence>
<evidence type="ECO:0007829" key="16">
    <source>
        <dbReference type="PDB" id="7NVU"/>
    </source>
</evidence>
<evidence type="ECO:0007829" key="17">
    <source>
        <dbReference type="PDB" id="8S52"/>
    </source>
</evidence>
<comment type="function">
    <text evidence="4">TFIIF is a general transcription initiation factor that binds to RNA polymerase II and helps to recruit it to the initiation complex in collaboration with TFIIB.</text>
</comment>
<comment type="subunit">
    <text evidence="1 2 3 5 6 7">Heterodimer of an alpha and a beta subunit. Interacts with HTATSF1 and GPBP1 (By similarity). Interacts with URI1. Interacts with GTF2B (via N-terminus); this interaction is inhibited in presence of GTF2F1 (PubMed:8504927, PubMed:8662660). Part of TBP-based Pol II pre-initiation complex (PIC), in which Pol II core assembles with general transcription factors and other specific initiation factors including GTF2E1, GTF2E2, GTF2F1, GTF2F2, TCEA1, ERCC2, ERCC3, GTF2H2, GTF2H3, GTF2H4, GTF2H5, GTF2A1, GTF2A2, GTF2B and TBP; this large multi-subunit PIC complex mediates DNA unwinding and targets Pol II core to the transcription start site where the first phosphodiester bond forms.</text>
</comment>
<comment type="interaction">
    <interactant intactId="EBI-1030560">
        <id>P13984</id>
    </interactant>
    <interactant intactId="EBI-2692044">
        <id>Q8WW35</id>
        <label>DYNLT2B</label>
    </interactant>
    <organismsDiffer>false</organismsDiffer>
    <experiments>2</experiments>
</comment>
<comment type="interaction">
    <interactant intactId="EBI-1030560">
        <id>P13984</id>
    </interactant>
    <interactant intactId="EBI-701903">
        <id>Q14192</id>
        <label>FHL2</label>
    </interactant>
    <organismsDiffer>false</organismsDiffer>
    <experiments>3</experiments>
</comment>
<comment type="interaction">
    <interactant intactId="EBI-1030560">
        <id>P13984</id>
    </interactant>
    <interactant intactId="EBI-457886">
        <id>P35269</id>
        <label>GTF2F1</label>
    </interactant>
    <organismsDiffer>false</organismsDiffer>
    <experiments>28</experiments>
</comment>
<comment type="interaction">
    <interactant intactId="EBI-1030560">
        <id>P13984</id>
    </interactant>
    <interactant intactId="EBI-726739">
        <id>Q9UPY8</id>
        <label>MAPRE3</label>
    </interactant>
    <organismsDiffer>false</organismsDiffer>
    <experiments>3</experiments>
</comment>
<comment type="interaction">
    <interactant intactId="EBI-1030560">
        <id>P13984</id>
    </interactant>
    <interactant intactId="EBI-350581">
        <id>P46776</id>
        <label>RPL27A</label>
    </interactant>
    <organismsDiffer>false</organismsDiffer>
    <experiments>2</experiments>
</comment>
<comment type="interaction">
    <interactant intactId="EBI-1030560">
        <id>P13984</id>
    </interactant>
    <interactant intactId="EBI-357067">
        <id>O94763</id>
        <label>URI1</label>
    </interactant>
    <organismsDiffer>false</organismsDiffer>
    <experiments>4</experiments>
</comment>
<comment type="interaction">
    <interactant intactId="EBI-1030560">
        <id>P13984</id>
    </interactant>
    <interactant intactId="EBI-746595">
        <id>Q96E35</id>
        <label>ZMYND19</label>
    </interactant>
    <organismsDiffer>false</organismsDiffer>
    <experiments>3</experiments>
</comment>
<comment type="subcellular location">
    <subcellularLocation>
        <location evidence="2">Nucleus</location>
    </subcellularLocation>
</comment>
<comment type="similarity">
    <text evidence="8">Belongs to the TFIIF beta subunit family.</text>
</comment>
<comment type="caution">
    <text evidence="9">GTF2F2 appears to have ATP-dependent DNA-helicase activity; however this is probably an artifact that happened during the protein purification.</text>
</comment>